<gene>
    <name evidence="1" type="primary">atpD</name>
    <name type="ordered locus">Bcep18194_A3288</name>
</gene>
<accession>Q39KX6</accession>
<organism>
    <name type="scientific">Burkholderia lata (strain ATCC 17760 / DSM 23089 / LMG 22485 / NCIMB 9086 / R18194 / 383)</name>
    <dbReference type="NCBI Taxonomy" id="482957"/>
    <lineage>
        <taxon>Bacteria</taxon>
        <taxon>Pseudomonadati</taxon>
        <taxon>Pseudomonadota</taxon>
        <taxon>Betaproteobacteria</taxon>
        <taxon>Burkholderiales</taxon>
        <taxon>Burkholderiaceae</taxon>
        <taxon>Burkholderia</taxon>
        <taxon>Burkholderia cepacia complex</taxon>
    </lineage>
</organism>
<protein>
    <recommendedName>
        <fullName evidence="1">ATP synthase subunit beta</fullName>
        <ecNumber evidence="1">7.1.2.2</ecNumber>
    </recommendedName>
    <alternativeName>
        <fullName evidence="1">ATP synthase F1 sector subunit beta</fullName>
    </alternativeName>
    <alternativeName>
        <fullName evidence="1">F-ATPase subunit beta</fullName>
    </alternativeName>
</protein>
<proteinExistence type="inferred from homology"/>
<keyword id="KW-0066">ATP synthesis</keyword>
<keyword id="KW-0067">ATP-binding</keyword>
<keyword id="KW-0997">Cell inner membrane</keyword>
<keyword id="KW-1003">Cell membrane</keyword>
<keyword id="KW-0139">CF(1)</keyword>
<keyword id="KW-0375">Hydrogen ion transport</keyword>
<keyword id="KW-0406">Ion transport</keyword>
<keyword id="KW-0472">Membrane</keyword>
<keyword id="KW-0547">Nucleotide-binding</keyword>
<keyword id="KW-1278">Translocase</keyword>
<keyword id="KW-0813">Transport</keyword>
<feature type="chain" id="PRO_0000254234" description="ATP synthase subunit beta">
    <location>
        <begin position="1"/>
        <end position="464"/>
    </location>
</feature>
<feature type="binding site" evidence="1">
    <location>
        <begin position="153"/>
        <end position="160"/>
    </location>
    <ligand>
        <name>ATP</name>
        <dbReference type="ChEBI" id="CHEBI:30616"/>
    </ligand>
</feature>
<dbReference type="EC" id="7.1.2.2" evidence="1"/>
<dbReference type="EMBL" id="CP000151">
    <property type="protein sequence ID" value="ABB06890.1"/>
    <property type="molecule type" value="Genomic_DNA"/>
</dbReference>
<dbReference type="RefSeq" id="WP_011350527.1">
    <property type="nucleotide sequence ID" value="NZ_CP024943.1"/>
</dbReference>
<dbReference type="SMR" id="Q39KX6"/>
<dbReference type="GeneID" id="93193637"/>
<dbReference type="KEGG" id="bur:Bcep18194_A3288"/>
<dbReference type="PATRIC" id="fig|482957.22.peg.118"/>
<dbReference type="HOGENOM" id="CLU_022398_0_2_4"/>
<dbReference type="Proteomes" id="UP000002705">
    <property type="component" value="Chromosome 1"/>
</dbReference>
<dbReference type="GO" id="GO:0005886">
    <property type="term" value="C:plasma membrane"/>
    <property type="evidence" value="ECO:0007669"/>
    <property type="project" value="UniProtKB-SubCell"/>
</dbReference>
<dbReference type="GO" id="GO:0045259">
    <property type="term" value="C:proton-transporting ATP synthase complex"/>
    <property type="evidence" value="ECO:0007669"/>
    <property type="project" value="UniProtKB-KW"/>
</dbReference>
<dbReference type="GO" id="GO:0005524">
    <property type="term" value="F:ATP binding"/>
    <property type="evidence" value="ECO:0007669"/>
    <property type="project" value="UniProtKB-UniRule"/>
</dbReference>
<dbReference type="GO" id="GO:0016887">
    <property type="term" value="F:ATP hydrolysis activity"/>
    <property type="evidence" value="ECO:0007669"/>
    <property type="project" value="InterPro"/>
</dbReference>
<dbReference type="GO" id="GO:0046933">
    <property type="term" value="F:proton-transporting ATP synthase activity, rotational mechanism"/>
    <property type="evidence" value="ECO:0007669"/>
    <property type="project" value="UniProtKB-UniRule"/>
</dbReference>
<dbReference type="CDD" id="cd18110">
    <property type="entry name" value="ATP-synt_F1_beta_C"/>
    <property type="match status" value="1"/>
</dbReference>
<dbReference type="CDD" id="cd18115">
    <property type="entry name" value="ATP-synt_F1_beta_N"/>
    <property type="match status" value="1"/>
</dbReference>
<dbReference type="CDD" id="cd01133">
    <property type="entry name" value="F1-ATPase_beta_CD"/>
    <property type="match status" value="1"/>
</dbReference>
<dbReference type="FunFam" id="1.10.1140.10:FF:000001">
    <property type="entry name" value="ATP synthase subunit beta"/>
    <property type="match status" value="1"/>
</dbReference>
<dbReference type="FunFam" id="3.40.50.300:FF:000004">
    <property type="entry name" value="ATP synthase subunit beta"/>
    <property type="match status" value="1"/>
</dbReference>
<dbReference type="Gene3D" id="2.40.10.170">
    <property type="match status" value="1"/>
</dbReference>
<dbReference type="Gene3D" id="1.10.1140.10">
    <property type="entry name" value="Bovine Mitochondrial F1-atpase, Atp Synthase Beta Chain, Chain D, domain 3"/>
    <property type="match status" value="1"/>
</dbReference>
<dbReference type="Gene3D" id="3.40.50.300">
    <property type="entry name" value="P-loop containing nucleotide triphosphate hydrolases"/>
    <property type="match status" value="1"/>
</dbReference>
<dbReference type="HAMAP" id="MF_01347">
    <property type="entry name" value="ATP_synth_beta_bact"/>
    <property type="match status" value="1"/>
</dbReference>
<dbReference type="InterPro" id="IPR003593">
    <property type="entry name" value="AAA+_ATPase"/>
</dbReference>
<dbReference type="InterPro" id="IPR055190">
    <property type="entry name" value="ATP-synt_VA_C"/>
</dbReference>
<dbReference type="InterPro" id="IPR005722">
    <property type="entry name" value="ATP_synth_F1_bsu"/>
</dbReference>
<dbReference type="InterPro" id="IPR020003">
    <property type="entry name" value="ATPase_a/bsu_AS"/>
</dbReference>
<dbReference type="InterPro" id="IPR050053">
    <property type="entry name" value="ATPase_alpha/beta_chains"/>
</dbReference>
<dbReference type="InterPro" id="IPR004100">
    <property type="entry name" value="ATPase_F1/V1/A1_a/bsu_N"/>
</dbReference>
<dbReference type="InterPro" id="IPR036121">
    <property type="entry name" value="ATPase_F1/V1/A1_a/bsu_N_sf"/>
</dbReference>
<dbReference type="InterPro" id="IPR000194">
    <property type="entry name" value="ATPase_F1/V1/A1_a/bsu_nucl-bd"/>
</dbReference>
<dbReference type="InterPro" id="IPR024034">
    <property type="entry name" value="ATPase_F1/V1_b/a_C"/>
</dbReference>
<dbReference type="InterPro" id="IPR027417">
    <property type="entry name" value="P-loop_NTPase"/>
</dbReference>
<dbReference type="NCBIfam" id="TIGR01039">
    <property type="entry name" value="atpD"/>
    <property type="match status" value="1"/>
</dbReference>
<dbReference type="PANTHER" id="PTHR15184">
    <property type="entry name" value="ATP SYNTHASE"/>
    <property type="match status" value="1"/>
</dbReference>
<dbReference type="PANTHER" id="PTHR15184:SF71">
    <property type="entry name" value="ATP SYNTHASE SUBUNIT BETA, MITOCHONDRIAL"/>
    <property type="match status" value="1"/>
</dbReference>
<dbReference type="Pfam" id="PF00006">
    <property type="entry name" value="ATP-synt_ab"/>
    <property type="match status" value="1"/>
</dbReference>
<dbReference type="Pfam" id="PF02874">
    <property type="entry name" value="ATP-synt_ab_N"/>
    <property type="match status" value="1"/>
</dbReference>
<dbReference type="Pfam" id="PF22919">
    <property type="entry name" value="ATP-synt_VA_C"/>
    <property type="match status" value="1"/>
</dbReference>
<dbReference type="SMART" id="SM00382">
    <property type="entry name" value="AAA"/>
    <property type="match status" value="1"/>
</dbReference>
<dbReference type="SUPFAM" id="SSF47917">
    <property type="entry name" value="C-terminal domain of alpha and beta subunits of F1 ATP synthase"/>
    <property type="match status" value="1"/>
</dbReference>
<dbReference type="SUPFAM" id="SSF50615">
    <property type="entry name" value="N-terminal domain of alpha and beta subunits of F1 ATP synthase"/>
    <property type="match status" value="1"/>
</dbReference>
<dbReference type="SUPFAM" id="SSF52540">
    <property type="entry name" value="P-loop containing nucleoside triphosphate hydrolases"/>
    <property type="match status" value="1"/>
</dbReference>
<dbReference type="PROSITE" id="PS00152">
    <property type="entry name" value="ATPASE_ALPHA_BETA"/>
    <property type="match status" value="1"/>
</dbReference>
<comment type="function">
    <text evidence="1">Produces ATP from ADP in the presence of a proton gradient across the membrane. The catalytic sites are hosted primarily by the beta subunits.</text>
</comment>
<comment type="catalytic activity">
    <reaction evidence="1">
        <text>ATP + H2O + 4 H(+)(in) = ADP + phosphate + 5 H(+)(out)</text>
        <dbReference type="Rhea" id="RHEA:57720"/>
        <dbReference type="ChEBI" id="CHEBI:15377"/>
        <dbReference type="ChEBI" id="CHEBI:15378"/>
        <dbReference type="ChEBI" id="CHEBI:30616"/>
        <dbReference type="ChEBI" id="CHEBI:43474"/>
        <dbReference type="ChEBI" id="CHEBI:456216"/>
        <dbReference type="EC" id="7.1.2.2"/>
    </reaction>
</comment>
<comment type="subunit">
    <text evidence="1">F-type ATPases have 2 components, CF(1) - the catalytic core - and CF(0) - the membrane proton channel. CF(1) has five subunits: alpha(3), beta(3), gamma(1), delta(1), epsilon(1). CF(0) has three main subunits: a(1), b(2) and c(9-12). The alpha and beta chains form an alternating ring which encloses part of the gamma chain. CF(1) is attached to CF(0) by a central stalk formed by the gamma and epsilon chains, while a peripheral stalk is formed by the delta and b chains.</text>
</comment>
<comment type="subcellular location">
    <subcellularLocation>
        <location evidence="1">Cell inner membrane</location>
        <topology evidence="1">Peripheral membrane protein</topology>
    </subcellularLocation>
</comment>
<comment type="similarity">
    <text evidence="1">Belongs to the ATPase alpha/beta chains family.</text>
</comment>
<name>ATPB_BURL3</name>
<reference key="1">
    <citation type="submission" date="2005-10" db="EMBL/GenBank/DDBJ databases">
        <title>Complete sequence of chromosome 1 of Burkholderia sp. 383.</title>
        <authorList>
            <consortium name="US DOE Joint Genome Institute"/>
            <person name="Copeland A."/>
            <person name="Lucas S."/>
            <person name="Lapidus A."/>
            <person name="Barry K."/>
            <person name="Detter J.C."/>
            <person name="Glavina T."/>
            <person name="Hammon N."/>
            <person name="Israni S."/>
            <person name="Pitluck S."/>
            <person name="Chain P."/>
            <person name="Malfatti S."/>
            <person name="Shin M."/>
            <person name="Vergez L."/>
            <person name="Schmutz J."/>
            <person name="Larimer F."/>
            <person name="Land M."/>
            <person name="Kyrpides N."/>
            <person name="Lykidis A."/>
            <person name="Richardson P."/>
        </authorList>
    </citation>
    <scope>NUCLEOTIDE SEQUENCE [LARGE SCALE GENOMIC DNA]</scope>
    <source>
        <strain>ATCC 17760 / DSM 23089 / LMG 22485 / NCIMB 9086 / R18194 / 383</strain>
    </source>
</reference>
<evidence type="ECO:0000255" key="1">
    <source>
        <dbReference type="HAMAP-Rule" id="MF_01347"/>
    </source>
</evidence>
<sequence>MSTAALVEGKIVQCIGAVIDVEFPRDSMPKIYDALILDGSELTLEVQQQLGDGVVRTICLGASDGLRRGLTVKNTAKPISVPVGKPTLGRIMDVLGRPIDEAGPIESETTRSIHQKAPAFDELSPSTELLETGIKVIDLICPFAKGGKVGLFGGAGVGKTVNMMELINNIAKEHGGYSVFAGVGERTREGNDFYHEMKDSNVLDKVALVYGQMNEPPGNRLRVALTGLTMAEHFRDEGLDVLFFVDNIYRFTLAGTEVSALLGRMPSAVGYQPTLAEEMGKLQERITSTKKGSITSVQAVYVPADDLTDPSPATTFGHLDATVVLSRDIASLGIYPAVDPLDSTSRQIDPNVIGEEHYSITRRVQQTLQRYKELRDIIAILGMDELSPEDKLSVARARKIQRFLSQPFHVAEVFTGSPGKYVPLKETIRGFKMIVDGECDHLPEQAFYMVGTIDEAFEKAKKIS</sequence>